<feature type="chain" id="PRO_1000046282" description="Large ribosomal subunit protein uL11">
    <location>
        <begin position="1"/>
        <end position="141"/>
    </location>
</feature>
<gene>
    <name evidence="1" type="primary">rplK</name>
    <name evidence="1" type="synonym">rpl11</name>
    <name type="ordered locus">SynWH7803_2374</name>
</gene>
<dbReference type="EMBL" id="CT971583">
    <property type="protein sequence ID" value="CAK24800.1"/>
    <property type="molecule type" value="Genomic_DNA"/>
</dbReference>
<dbReference type="SMR" id="A5GPD5"/>
<dbReference type="STRING" id="32051.SynWH7803_2374"/>
<dbReference type="KEGG" id="syx:SynWH7803_2374"/>
<dbReference type="eggNOG" id="COG0080">
    <property type="taxonomic scope" value="Bacteria"/>
</dbReference>
<dbReference type="HOGENOM" id="CLU_074237_2_2_3"/>
<dbReference type="OrthoDB" id="9802408at2"/>
<dbReference type="Proteomes" id="UP000001566">
    <property type="component" value="Chromosome"/>
</dbReference>
<dbReference type="GO" id="GO:0022625">
    <property type="term" value="C:cytosolic large ribosomal subunit"/>
    <property type="evidence" value="ECO:0007669"/>
    <property type="project" value="TreeGrafter"/>
</dbReference>
<dbReference type="GO" id="GO:0070180">
    <property type="term" value="F:large ribosomal subunit rRNA binding"/>
    <property type="evidence" value="ECO:0007669"/>
    <property type="project" value="UniProtKB-UniRule"/>
</dbReference>
<dbReference type="GO" id="GO:0003735">
    <property type="term" value="F:structural constituent of ribosome"/>
    <property type="evidence" value="ECO:0007669"/>
    <property type="project" value="InterPro"/>
</dbReference>
<dbReference type="GO" id="GO:0006412">
    <property type="term" value="P:translation"/>
    <property type="evidence" value="ECO:0007669"/>
    <property type="project" value="UniProtKB-UniRule"/>
</dbReference>
<dbReference type="CDD" id="cd00349">
    <property type="entry name" value="Ribosomal_L11"/>
    <property type="match status" value="1"/>
</dbReference>
<dbReference type="FunFam" id="1.10.10.250:FF:000001">
    <property type="entry name" value="50S ribosomal protein L11"/>
    <property type="match status" value="1"/>
</dbReference>
<dbReference type="FunFam" id="3.30.1550.10:FF:000001">
    <property type="entry name" value="50S ribosomal protein L11"/>
    <property type="match status" value="1"/>
</dbReference>
<dbReference type="Gene3D" id="1.10.10.250">
    <property type="entry name" value="Ribosomal protein L11, C-terminal domain"/>
    <property type="match status" value="1"/>
</dbReference>
<dbReference type="Gene3D" id="3.30.1550.10">
    <property type="entry name" value="Ribosomal protein L11/L12, N-terminal domain"/>
    <property type="match status" value="1"/>
</dbReference>
<dbReference type="HAMAP" id="MF_00736">
    <property type="entry name" value="Ribosomal_uL11"/>
    <property type="match status" value="1"/>
</dbReference>
<dbReference type="InterPro" id="IPR000911">
    <property type="entry name" value="Ribosomal_uL11"/>
</dbReference>
<dbReference type="InterPro" id="IPR006519">
    <property type="entry name" value="Ribosomal_uL11_bac-typ"/>
</dbReference>
<dbReference type="InterPro" id="IPR020783">
    <property type="entry name" value="Ribosomal_uL11_C"/>
</dbReference>
<dbReference type="InterPro" id="IPR036769">
    <property type="entry name" value="Ribosomal_uL11_C_sf"/>
</dbReference>
<dbReference type="InterPro" id="IPR020785">
    <property type="entry name" value="Ribosomal_uL11_CS"/>
</dbReference>
<dbReference type="InterPro" id="IPR020784">
    <property type="entry name" value="Ribosomal_uL11_N"/>
</dbReference>
<dbReference type="InterPro" id="IPR036796">
    <property type="entry name" value="Ribosomal_uL11_N_sf"/>
</dbReference>
<dbReference type="NCBIfam" id="TIGR01632">
    <property type="entry name" value="L11_bact"/>
    <property type="match status" value="1"/>
</dbReference>
<dbReference type="PANTHER" id="PTHR11661">
    <property type="entry name" value="60S RIBOSOMAL PROTEIN L12"/>
    <property type="match status" value="1"/>
</dbReference>
<dbReference type="PANTHER" id="PTHR11661:SF1">
    <property type="entry name" value="LARGE RIBOSOMAL SUBUNIT PROTEIN UL11M"/>
    <property type="match status" value="1"/>
</dbReference>
<dbReference type="Pfam" id="PF00298">
    <property type="entry name" value="Ribosomal_L11"/>
    <property type="match status" value="1"/>
</dbReference>
<dbReference type="Pfam" id="PF03946">
    <property type="entry name" value="Ribosomal_L11_N"/>
    <property type="match status" value="1"/>
</dbReference>
<dbReference type="SMART" id="SM00649">
    <property type="entry name" value="RL11"/>
    <property type="match status" value="1"/>
</dbReference>
<dbReference type="SUPFAM" id="SSF54747">
    <property type="entry name" value="Ribosomal L11/L12e N-terminal domain"/>
    <property type="match status" value="1"/>
</dbReference>
<dbReference type="SUPFAM" id="SSF46906">
    <property type="entry name" value="Ribosomal protein L11, C-terminal domain"/>
    <property type="match status" value="1"/>
</dbReference>
<dbReference type="PROSITE" id="PS00359">
    <property type="entry name" value="RIBOSOMAL_L11"/>
    <property type="match status" value="1"/>
</dbReference>
<protein>
    <recommendedName>
        <fullName evidence="1">Large ribosomal subunit protein uL11</fullName>
    </recommendedName>
    <alternativeName>
        <fullName evidence="2">50S ribosomal protein L11</fullName>
    </alternativeName>
</protein>
<comment type="function">
    <text evidence="1">Forms part of the ribosomal stalk which helps the ribosome interact with GTP-bound translation factors.</text>
</comment>
<comment type="subunit">
    <text evidence="1">Part of the ribosomal stalk of the 50S ribosomal subunit. Interacts with L10 and the large rRNA to form the base of the stalk. L10 forms an elongated spine to which L12 dimers bind in a sequential fashion forming a multimeric L10(L12)X complex.</text>
</comment>
<comment type="PTM">
    <text evidence="1">One or more lysine residues are methylated.</text>
</comment>
<comment type="similarity">
    <text evidence="1">Belongs to the universal ribosomal protein uL11 family.</text>
</comment>
<proteinExistence type="inferred from homology"/>
<keyword id="KW-0488">Methylation</keyword>
<keyword id="KW-1185">Reference proteome</keyword>
<keyword id="KW-0687">Ribonucleoprotein</keyword>
<keyword id="KW-0689">Ribosomal protein</keyword>
<keyword id="KW-0694">RNA-binding</keyword>
<keyword id="KW-0699">rRNA-binding</keyword>
<name>RL11_SYNPW</name>
<evidence type="ECO:0000255" key="1">
    <source>
        <dbReference type="HAMAP-Rule" id="MF_00736"/>
    </source>
</evidence>
<evidence type="ECO:0000305" key="2"/>
<reference key="1">
    <citation type="submission" date="2006-05" db="EMBL/GenBank/DDBJ databases">
        <authorList>
            <consortium name="Genoscope"/>
        </authorList>
    </citation>
    <scope>NUCLEOTIDE SEQUENCE [LARGE SCALE GENOMIC DNA]</scope>
    <source>
        <strain>WH7803</strain>
    </source>
</reference>
<organism>
    <name type="scientific">Synechococcus sp. (strain WH7803)</name>
    <dbReference type="NCBI Taxonomy" id="32051"/>
    <lineage>
        <taxon>Bacteria</taxon>
        <taxon>Bacillati</taxon>
        <taxon>Cyanobacteriota</taxon>
        <taxon>Cyanophyceae</taxon>
        <taxon>Synechococcales</taxon>
        <taxon>Synechococcaceae</taxon>
        <taxon>Synechococcus</taxon>
    </lineage>
</organism>
<accession>A5GPD5</accession>
<sequence>MAKKVTAVIKLALQAGKANPAPPVGPALGQHGVNIMAFCKEYNARTQDKAGFVIPVEISVFEDRSFTFITKTPPASVLITKAAGIEKGSGESAKGSVGSIKRSQLEEIAKTKLPDLNCTSIESAMRIIEGTARNMGVAITD</sequence>